<proteinExistence type="inferred from homology"/>
<accession>B7NEK6</accession>
<feature type="chain" id="PRO_1000187289" description="Glyoxylate/hydroxypyruvate reductase B">
    <location>
        <begin position="1"/>
        <end position="324"/>
    </location>
</feature>
<feature type="active site" evidence="1">
    <location>
        <position position="237"/>
    </location>
</feature>
<feature type="active site" evidence="1">
    <location>
        <position position="266"/>
    </location>
</feature>
<feature type="active site" description="Proton donor" evidence="1">
    <location>
        <position position="285"/>
    </location>
</feature>
<dbReference type="EC" id="1.1.1.79" evidence="1"/>
<dbReference type="EC" id="1.1.1.81" evidence="1"/>
<dbReference type="EMBL" id="CU928163">
    <property type="protein sequence ID" value="CAR15207.1"/>
    <property type="molecule type" value="Genomic_DNA"/>
</dbReference>
<dbReference type="RefSeq" id="WP_000805006.1">
    <property type="nucleotide sequence ID" value="NC_011751.1"/>
</dbReference>
<dbReference type="RefSeq" id="YP_002414707.1">
    <property type="nucleotide sequence ID" value="NC_011751.1"/>
</dbReference>
<dbReference type="SMR" id="B7NEK6"/>
<dbReference type="STRING" id="585056.ECUMN_4065"/>
<dbReference type="KEGG" id="eum:ECUMN_4065"/>
<dbReference type="PATRIC" id="fig|585056.7.peg.4239"/>
<dbReference type="HOGENOM" id="CLU_019796_1_2_6"/>
<dbReference type="Proteomes" id="UP000007097">
    <property type="component" value="Chromosome"/>
</dbReference>
<dbReference type="GO" id="GO:0005829">
    <property type="term" value="C:cytosol"/>
    <property type="evidence" value="ECO:0007669"/>
    <property type="project" value="UniProtKB-ARBA"/>
</dbReference>
<dbReference type="GO" id="GO:0005886">
    <property type="term" value="C:plasma membrane"/>
    <property type="evidence" value="ECO:0007669"/>
    <property type="project" value="UniProtKB-UniRule"/>
</dbReference>
<dbReference type="GO" id="GO:0030267">
    <property type="term" value="F:glyoxylate reductase (NADPH) activity"/>
    <property type="evidence" value="ECO:0007669"/>
    <property type="project" value="UniProtKB-UniRule"/>
</dbReference>
<dbReference type="GO" id="GO:0008465">
    <property type="term" value="F:hydroxypyruvate reductase (NADH) activity"/>
    <property type="evidence" value="ECO:0007669"/>
    <property type="project" value="RHEA"/>
</dbReference>
<dbReference type="GO" id="GO:0120509">
    <property type="term" value="F:hydroxypyruvate reductase (NADPH) activity"/>
    <property type="evidence" value="ECO:0007669"/>
    <property type="project" value="RHEA"/>
</dbReference>
<dbReference type="GO" id="GO:0051287">
    <property type="term" value="F:NAD binding"/>
    <property type="evidence" value="ECO:0007669"/>
    <property type="project" value="InterPro"/>
</dbReference>
<dbReference type="CDD" id="cd05301">
    <property type="entry name" value="GDH"/>
    <property type="match status" value="1"/>
</dbReference>
<dbReference type="FunFam" id="3.40.50.720:FF:000026">
    <property type="entry name" value="Glyoxylate/hydroxypyruvate reductase B"/>
    <property type="match status" value="1"/>
</dbReference>
<dbReference type="Gene3D" id="3.40.50.720">
    <property type="entry name" value="NAD(P)-binding Rossmann-like Domain"/>
    <property type="match status" value="2"/>
</dbReference>
<dbReference type="HAMAP" id="MF_01667">
    <property type="entry name" value="2_Hacid_dh_C_GhrB"/>
    <property type="match status" value="1"/>
</dbReference>
<dbReference type="InterPro" id="IPR050223">
    <property type="entry name" value="D-isomer_2-hydroxyacid_DH"/>
</dbReference>
<dbReference type="InterPro" id="IPR006139">
    <property type="entry name" value="D-isomer_2_OHA_DH_cat_dom"/>
</dbReference>
<dbReference type="InterPro" id="IPR029753">
    <property type="entry name" value="D-isomer_DH_CS"/>
</dbReference>
<dbReference type="InterPro" id="IPR006140">
    <property type="entry name" value="D-isomer_DH_NAD-bd"/>
</dbReference>
<dbReference type="InterPro" id="IPR023756">
    <property type="entry name" value="Glyo/OHPyrv_Rdtase_B"/>
</dbReference>
<dbReference type="InterPro" id="IPR036291">
    <property type="entry name" value="NAD(P)-bd_dom_sf"/>
</dbReference>
<dbReference type="NCBIfam" id="NF011938">
    <property type="entry name" value="PRK15409.1"/>
    <property type="match status" value="1"/>
</dbReference>
<dbReference type="PANTHER" id="PTHR10996">
    <property type="entry name" value="2-HYDROXYACID DEHYDROGENASE-RELATED"/>
    <property type="match status" value="1"/>
</dbReference>
<dbReference type="PANTHER" id="PTHR10996:SF283">
    <property type="entry name" value="GLYOXYLATE_HYDROXYPYRUVATE REDUCTASE B"/>
    <property type="match status" value="1"/>
</dbReference>
<dbReference type="Pfam" id="PF00389">
    <property type="entry name" value="2-Hacid_dh"/>
    <property type="match status" value="1"/>
</dbReference>
<dbReference type="Pfam" id="PF02826">
    <property type="entry name" value="2-Hacid_dh_C"/>
    <property type="match status" value="1"/>
</dbReference>
<dbReference type="SUPFAM" id="SSF52283">
    <property type="entry name" value="Formate/glycerate dehydrogenase catalytic domain-like"/>
    <property type="match status" value="1"/>
</dbReference>
<dbReference type="SUPFAM" id="SSF51735">
    <property type="entry name" value="NAD(P)-binding Rossmann-fold domains"/>
    <property type="match status" value="1"/>
</dbReference>
<dbReference type="PROSITE" id="PS00670">
    <property type="entry name" value="D_2_HYDROXYACID_DH_2"/>
    <property type="match status" value="1"/>
</dbReference>
<dbReference type="PROSITE" id="PS00671">
    <property type="entry name" value="D_2_HYDROXYACID_DH_3"/>
    <property type="match status" value="1"/>
</dbReference>
<keyword id="KW-0963">Cytoplasm</keyword>
<keyword id="KW-0520">NAD</keyword>
<keyword id="KW-0521">NADP</keyword>
<keyword id="KW-0560">Oxidoreductase</keyword>
<protein>
    <recommendedName>
        <fullName evidence="1">Glyoxylate/hydroxypyruvate reductase B</fullName>
        <ecNumber evidence="1">1.1.1.79</ecNumber>
        <ecNumber evidence="1">1.1.1.81</ecNumber>
    </recommendedName>
</protein>
<reference key="1">
    <citation type="journal article" date="2009" name="PLoS Genet.">
        <title>Organised genome dynamics in the Escherichia coli species results in highly diverse adaptive paths.</title>
        <authorList>
            <person name="Touchon M."/>
            <person name="Hoede C."/>
            <person name="Tenaillon O."/>
            <person name="Barbe V."/>
            <person name="Baeriswyl S."/>
            <person name="Bidet P."/>
            <person name="Bingen E."/>
            <person name="Bonacorsi S."/>
            <person name="Bouchier C."/>
            <person name="Bouvet O."/>
            <person name="Calteau A."/>
            <person name="Chiapello H."/>
            <person name="Clermont O."/>
            <person name="Cruveiller S."/>
            <person name="Danchin A."/>
            <person name="Diard M."/>
            <person name="Dossat C."/>
            <person name="Karoui M.E."/>
            <person name="Frapy E."/>
            <person name="Garry L."/>
            <person name="Ghigo J.M."/>
            <person name="Gilles A.M."/>
            <person name="Johnson J."/>
            <person name="Le Bouguenec C."/>
            <person name="Lescat M."/>
            <person name="Mangenot S."/>
            <person name="Martinez-Jehanne V."/>
            <person name="Matic I."/>
            <person name="Nassif X."/>
            <person name="Oztas S."/>
            <person name="Petit M.A."/>
            <person name="Pichon C."/>
            <person name="Rouy Z."/>
            <person name="Ruf C.S."/>
            <person name="Schneider D."/>
            <person name="Tourret J."/>
            <person name="Vacherie B."/>
            <person name="Vallenet D."/>
            <person name="Medigue C."/>
            <person name="Rocha E.P.C."/>
            <person name="Denamur E."/>
        </authorList>
    </citation>
    <scope>NUCLEOTIDE SEQUENCE [LARGE SCALE GENOMIC DNA]</scope>
    <source>
        <strain>UMN026 / ExPEC</strain>
    </source>
</reference>
<evidence type="ECO:0000255" key="1">
    <source>
        <dbReference type="HAMAP-Rule" id="MF_01667"/>
    </source>
</evidence>
<comment type="function">
    <text evidence="1">Catalyzes the NADPH-dependent reduction of glyoxylate and hydroxypyruvate into glycolate and glycerate, respectively.</text>
</comment>
<comment type="catalytic activity">
    <reaction evidence="1">
        <text>glycolate + NADP(+) = glyoxylate + NADPH + H(+)</text>
        <dbReference type="Rhea" id="RHEA:10992"/>
        <dbReference type="ChEBI" id="CHEBI:15378"/>
        <dbReference type="ChEBI" id="CHEBI:29805"/>
        <dbReference type="ChEBI" id="CHEBI:36655"/>
        <dbReference type="ChEBI" id="CHEBI:57783"/>
        <dbReference type="ChEBI" id="CHEBI:58349"/>
        <dbReference type="EC" id="1.1.1.79"/>
    </reaction>
</comment>
<comment type="catalytic activity">
    <reaction evidence="1">
        <text>(R)-glycerate + NAD(+) = 3-hydroxypyruvate + NADH + H(+)</text>
        <dbReference type="Rhea" id="RHEA:17905"/>
        <dbReference type="ChEBI" id="CHEBI:15378"/>
        <dbReference type="ChEBI" id="CHEBI:16659"/>
        <dbReference type="ChEBI" id="CHEBI:17180"/>
        <dbReference type="ChEBI" id="CHEBI:57540"/>
        <dbReference type="ChEBI" id="CHEBI:57945"/>
        <dbReference type="EC" id="1.1.1.81"/>
    </reaction>
</comment>
<comment type="catalytic activity">
    <reaction evidence="1">
        <text>(R)-glycerate + NADP(+) = 3-hydroxypyruvate + NADPH + H(+)</text>
        <dbReference type="Rhea" id="RHEA:18657"/>
        <dbReference type="ChEBI" id="CHEBI:15378"/>
        <dbReference type="ChEBI" id="CHEBI:16659"/>
        <dbReference type="ChEBI" id="CHEBI:17180"/>
        <dbReference type="ChEBI" id="CHEBI:57783"/>
        <dbReference type="ChEBI" id="CHEBI:58349"/>
        <dbReference type="EC" id="1.1.1.81"/>
    </reaction>
</comment>
<comment type="subunit">
    <text evidence="1">Homodimer.</text>
</comment>
<comment type="subcellular location">
    <subcellularLocation>
        <location evidence="1">Cytoplasm</location>
    </subcellularLocation>
</comment>
<comment type="similarity">
    <text evidence="1">Belongs to the D-isomer specific 2-hydroxyacid dehydrogenase family. GhrB subfamily.</text>
</comment>
<organism>
    <name type="scientific">Escherichia coli O17:K52:H18 (strain UMN026 / ExPEC)</name>
    <dbReference type="NCBI Taxonomy" id="585056"/>
    <lineage>
        <taxon>Bacteria</taxon>
        <taxon>Pseudomonadati</taxon>
        <taxon>Pseudomonadota</taxon>
        <taxon>Gammaproteobacteria</taxon>
        <taxon>Enterobacterales</taxon>
        <taxon>Enterobacteriaceae</taxon>
        <taxon>Escherichia</taxon>
    </lineage>
</organism>
<gene>
    <name evidence="1" type="primary">ghrB</name>
    <name type="ordered locus">ECUMN_4065</name>
</gene>
<name>GHRB_ECOLU</name>
<sequence>MKPSVILYKALPDDLLQRLQEHFTVHQVANLSPQTIEQNAAIFAEAEGLLGSNENVDAALLGKMPKLRATSTISVGYDNFDVDALTARKILLMHTPTVLTETVADTLMALVLSTARRVVEVAERVKAGEWTASIGPDWYGTDVHHKTLGIVGMGRIGMALAQRAHFGFNMPILYNARRHHKEAEERFNARYCDLDSLLQESDFVCLILPLTDETYHLFGAEQFGKMKSSAIFINAGRGPVVDENALIAALQKGEIHAAGLDVFEQEPLSVDSPLLSMANVVAVPHIGSATHETRYGMAACAVDNLIDALQGKVEKNCVNPHVAD</sequence>